<accession>A3D3U0</accession>
<name>OPGH_SHEB5</name>
<proteinExistence type="inferred from homology"/>
<sequence length="727" mass="81045">MTVSENSVLETEVLVGGSAMPNERPGAMEPQKLSKMPEGFPRRSTVANGVRSRASRRFLVVGGALLLSLFAIYEMGAVFSIGGITPLEYLVLALFAVNFCWIALAFCSGIAGFLILLRKPRAKDLQVTELHTRTAILMPTYNESPDRVFSAVSVMAETLSQTGHGHAFDWFILSDTTDPDIALLEEQAFLVLRQETHKHSRVYYRRRRKNVARKAGNVADFCRRWGSRYDHLLVLDADSLMESSTITGLAQRMQADPDAGLIQTIPSLINGTTLMARLQQFAARIYGPVIGTGLGWWVQKEGNFWGHNAIIRTEAFMTAAGLPNLKGKPPFGGHIMSHDFVEAALIRRAGWSVVIAYDLPGSYEECPPSIIDLAVRDRRWCQGNLQHSRILPTKGLHWVSRLHLLTGIMAYLSSPFWLMLILTGLMLALQAHFIRPEYFTDQFSLFPTWPIMDSDRALRLFYITMGVLFGPKVFGVLLLLKDGEFARSVGGRIKAIFSVIFEVILSALIAPIMMFIHCGAVMSILMGRDSGWSPQRRDDGSMPWMTLIYRHRWHMLAGVMLGYAAILDSLTLLAWMSPALIGLWIAVPISAWTGSVKIGEVFKRAGILATPEERNPAQICLQAHEARAAYQKHIAEPWTLAQVLKDPALMELHLAMVDKQPLRAAGTPIEAMEAIVHVKVHEARCQQSALAVLNRQEMAMVLANPLMLRSLQKLPEQFVEEDLVSFC</sequence>
<comment type="function">
    <text evidence="1">Involved in the biosynthesis of osmoregulated periplasmic glucans (OPGs).</text>
</comment>
<comment type="pathway">
    <text evidence="1">Glycan metabolism; osmoregulated periplasmic glucan (OPG) biosynthesis.</text>
</comment>
<comment type="subcellular location">
    <subcellularLocation>
        <location evidence="1">Cell inner membrane</location>
        <topology evidence="1">Multi-pass membrane protein</topology>
    </subcellularLocation>
</comment>
<comment type="similarity">
    <text evidence="1">Belongs to the glycosyltransferase 2 family. OpgH subfamily.</text>
</comment>
<organism>
    <name type="scientific">Shewanella baltica (strain OS155 / ATCC BAA-1091)</name>
    <dbReference type="NCBI Taxonomy" id="325240"/>
    <lineage>
        <taxon>Bacteria</taxon>
        <taxon>Pseudomonadati</taxon>
        <taxon>Pseudomonadota</taxon>
        <taxon>Gammaproteobacteria</taxon>
        <taxon>Alteromonadales</taxon>
        <taxon>Shewanellaceae</taxon>
        <taxon>Shewanella</taxon>
    </lineage>
</organism>
<reference key="1">
    <citation type="submission" date="2007-02" db="EMBL/GenBank/DDBJ databases">
        <title>Complete sequence of chromosome of Shewanella baltica OS155.</title>
        <authorList>
            <consortium name="US DOE Joint Genome Institute"/>
            <person name="Copeland A."/>
            <person name="Lucas S."/>
            <person name="Lapidus A."/>
            <person name="Barry K."/>
            <person name="Detter J.C."/>
            <person name="Glavina del Rio T."/>
            <person name="Hammon N."/>
            <person name="Israni S."/>
            <person name="Dalin E."/>
            <person name="Tice H."/>
            <person name="Pitluck S."/>
            <person name="Sims D.R."/>
            <person name="Brettin T."/>
            <person name="Bruce D."/>
            <person name="Han C."/>
            <person name="Tapia R."/>
            <person name="Brainard J."/>
            <person name="Schmutz J."/>
            <person name="Larimer F."/>
            <person name="Land M."/>
            <person name="Hauser L."/>
            <person name="Kyrpides N."/>
            <person name="Mikhailova N."/>
            <person name="Brettar I."/>
            <person name="Klappenbach J."/>
            <person name="Konstantinidis K."/>
            <person name="Rodrigues J."/>
            <person name="Tiedje J."/>
            <person name="Richardson P."/>
        </authorList>
    </citation>
    <scope>NUCLEOTIDE SEQUENCE [LARGE SCALE GENOMIC DNA]</scope>
    <source>
        <strain>OS155 / ATCC BAA-1091</strain>
    </source>
</reference>
<dbReference type="EC" id="2.4.1.-" evidence="1"/>
<dbReference type="EMBL" id="CP000563">
    <property type="protein sequence ID" value="ABN61403.1"/>
    <property type="molecule type" value="Genomic_DNA"/>
</dbReference>
<dbReference type="RefSeq" id="WP_011846653.1">
    <property type="nucleotide sequence ID" value="NC_009052.1"/>
</dbReference>
<dbReference type="STRING" id="325240.Sbal_1897"/>
<dbReference type="CAZy" id="GT2">
    <property type="family name" value="Glycosyltransferase Family 2"/>
</dbReference>
<dbReference type="KEGG" id="sbl:Sbal_1897"/>
<dbReference type="HOGENOM" id="CLU_015730_1_0_6"/>
<dbReference type="OrthoDB" id="9775281at2"/>
<dbReference type="UniPathway" id="UPA00637"/>
<dbReference type="Proteomes" id="UP000001557">
    <property type="component" value="Chromosome"/>
</dbReference>
<dbReference type="GO" id="GO:0005886">
    <property type="term" value="C:plasma membrane"/>
    <property type="evidence" value="ECO:0007669"/>
    <property type="project" value="UniProtKB-SubCell"/>
</dbReference>
<dbReference type="GO" id="GO:0016758">
    <property type="term" value="F:hexosyltransferase activity"/>
    <property type="evidence" value="ECO:0007669"/>
    <property type="project" value="UniProtKB-UniRule"/>
</dbReference>
<dbReference type="GO" id="GO:0009250">
    <property type="term" value="P:glucan biosynthetic process"/>
    <property type="evidence" value="ECO:0007669"/>
    <property type="project" value="UniProtKB-UniRule"/>
</dbReference>
<dbReference type="CDD" id="cd04191">
    <property type="entry name" value="Glucan_BSP_MdoH"/>
    <property type="match status" value="1"/>
</dbReference>
<dbReference type="FunFam" id="3.90.550.10:FF:000047">
    <property type="entry name" value="Glucans biosynthesis glucosyltransferase H"/>
    <property type="match status" value="1"/>
</dbReference>
<dbReference type="Gene3D" id="3.90.550.10">
    <property type="entry name" value="Spore Coat Polysaccharide Biosynthesis Protein SpsA, Chain A"/>
    <property type="match status" value="1"/>
</dbReference>
<dbReference type="HAMAP" id="MF_01072">
    <property type="entry name" value="MdoH_OpgH"/>
    <property type="match status" value="1"/>
</dbReference>
<dbReference type="InterPro" id="IPR023725">
    <property type="entry name" value="Glucans_biosynth_gluTrFase_H"/>
</dbReference>
<dbReference type="InterPro" id="IPR001173">
    <property type="entry name" value="Glyco_trans_2-like"/>
</dbReference>
<dbReference type="InterPro" id="IPR050321">
    <property type="entry name" value="Glycosyltr_2/OpgH_subfam"/>
</dbReference>
<dbReference type="InterPro" id="IPR029044">
    <property type="entry name" value="Nucleotide-diphossugar_trans"/>
</dbReference>
<dbReference type="NCBIfam" id="NF003956">
    <property type="entry name" value="PRK05454.1-3"/>
    <property type="match status" value="1"/>
</dbReference>
<dbReference type="NCBIfam" id="NF003958">
    <property type="entry name" value="PRK05454.2-1"/>
    <property type="match status" value="1"/>
</dbReference>
<dbReference type="NCBIfam" id="NF003962">
    <property type="entry name" value="PRK05454.2-5"/>
    <property type="match status" value="1"/>
</dbReference>
<dbReference type="PANTHER" id="PTHR43867">
    <property type="entry name" value="CELLULOSE SYNTHASE CATALYTIC SUBUNIT A [UDP-FORMING]"/>
    <property type="match status" value="1"/>
</dbReference>
<dbReference type="PANTHER" id="PTHR43867:SF5">
    <property type="entry name" value="GLUCANS BIOSYNTHESIS GLUCOSYLTRANSFERASE H"/>
    <property type="match status" value="1"/>
</dbReference>
<dbReference type="Pfam" id="PF13632">
    <property type="entry name" value="Glyco_trans_2_3"/>
    <property type="match status" value="1"/>
</dbReference>
<dbReference type="SUPFAM" id="SSF53448">
    <property type="entry name" value="Nucleotide-diphospho-sugar transferases"/>
    <property type="match status" value="1"/>
</dbReference>
<feature type="chain" id="PRO_1000084500" description="Glucans biosynthesis glucosyltransferase H">
    <location>
        <begin position="1"/>
        <end position="727"/>
    </location>
</feature>
<feature type="transmembrane region" description="Helical" evidence="1">
    <location>
        <begin position="58"/>
        <end position="78"/>
    </location>
</feature>
<feature type="transmembrane region" description="Helical" evidence="1">
    <location>
        <begin position="97"/>
        <end position="117"/>
    </location>
</feature>
<feature type="transmembrane region" description="Helical" evidence="1">
    <location>
        <begin position="278"/>
        <end position="298"/>
    </location>
</feature>
<feature type="transmembrane region" description="Helical" evidence="1">
    <location>
        <begin position="408"/>
        <end position="428"/>
    </location>
</feature>
<feature type="transmembrane region" description="Helical" evidence="1">
    <location>
        <begin position="460"/>
        <end position="480"/>
    </location>
</feature>
<feature type="transmembrane region" description="Helical" evidence="1">
    <location>
        <begin position="496"/>
        <end position="516"/>
    </location>
</feature>
<feature type="transmembrane region" description="Helical" evidence="1">
    <location>
        <begin position="572"/>
        <end position="592"/>
    </location>
</feature>
<feature type="region of interest" description="Disordered" evidence="2">
    <location>
        <begin position="18"/>
        <end position="41"/>
    </location>
</feature>
<gene>
    <name evidence="1" type="primary">opgH</name>
    <name type="ordered locus">Sbal_1897</name>
</gene>
<keyword id="KW-0997">Cell inner membrane</keyword>
<keyword id="KW-1003">Cell membrane</keyword>
<keyword id="KW-0328">Glycosyltransferase</keyword>
<keyword id="KW-0472">Membrane</keyword>
<keyword id="KW-1185">Reference proteome</keyword>
<keyword id="KW-0808">Transferase</keyword>
<keyword id="KW-0812">Transmembrane</keyword>
<keyword id="KW-1133">Transmembrane helix</keyword>
<protein>
    <recommendedName>
        <fullName evidence="1">Glucans biosynthesis glucosyltransferase H</fullName>
        <ecNumber evidence="1">2.4.1.-</ecNumber>
    </recommendedName>
</protein>
<evidence type="ECO:0000255" key="1">
    <source>
        <dbReference type="HAMAP-Rule" id="MF_01072"/>
    </source>
</evidence>
<evidence type="ECO:0000256" key="2">
    <source>
        <dbReference type="SAM" id="MobiDB-lite"/>
    </source>
</evidence>